<gene>
    <name type="ordered locus">AF_2354</name>
</gene>
<dbReference type="EMBL" id="AE000782">
    <property type="protein sequence ID" value="AAB91310.1"/>
    <property type="molecule type" value="Genomic_DNA"/>
</dbReference>
<dbReference type="PIR" id="B69544">
    <property type="entry name" value="B69544"/>
</dbReference>
<dbReference type="RefSeq" id="WP_010879840.1">
    <property type="nucleotide sequence ID" value="NC_000917.1"/>
</dbReference>
<dbReference type="SMR" id="O30316"/>
<dbReference type="STRING" id="224325.AF_2354"/>
<dbReference type="PaxDb" id="224325-AF_2354"/>
<dbReference type="EnsemblBacteria" id="AAB91310">
    <property type="protein sequence ID" value="AAB91310"/>
    <property type="gene ID" value="AF_2354"/>
</dbReference>
<dbReference type="GeneID" id="1485584"/>
<dbReference type="KEGG" id="afu:AF_2354"/>
<dbReference type="HOGENOM" id="CLU_2366041_0_0_2"/>
<dbReference type="OrthoDB" id="1823at2233"/>
<dbReference type="Proteomes" id="UP000002199">
    <property type="component" value="Chromosome"/>
</dbReference>
<dbReference type="PROSITE" id="PS51257">
    <property type="entry name" value="PROKAR_LIPOPROTEIN"/>
    <property type="match status" value="1"/>
</dbReference>
<evidence type="ECO:0000255" key="1">
    <source>
        <dbReference type="PROSITE-ProRule" id="PRU00303"/>
    </source>
</evidence>
<protein>
    <recommendedName>
        <fullName>Uncharacterized protein AF_2354</fullName>
    </recommendedName>
</protein>
<reference key="1">
    <citation type="journal article" date="1997" name="Nature">
        <title>The complete genome sequence of the hyperthermophilic, sulphate-reducing archaeon Archaeoglobus fulgidus.</title>
        <authorList>
            <person name="Klenk H.-P."/>
            <person name="Clayton R.A."/>
            <person name="Tomb J.-F."/>
            <person name="White O."/>
            <person name="Nelson K.E."/>
            <person name="Ketchum K.A."/>
            <person name="Dodson R.J."/>
            <person name="Gwinn M.L."/>
            <person name="Hickey E.K."/>
            <person name="Peterson J.D."/>
            <person name="Richardson D.L."/>
            <person name="Kerlavage A.R."/>
            <person name="Graham D.E."/>
            <person name="Kyrpides N.C."/>
            <person name="Fleischmann R.D."/>
            <person name="Quackenbush J."/>
            <person name="Lee N.H."/>
            <person name="Sutton G.G."/>
            <person name="Gill S.R."/>
            <person name="Kirkness E.F."/>
            <person name="Dougherty B.A."/>
            <person name="McKenney K."/>
            <person name="Adams M.D."/>
            <person name="Loftus B.J."/>
            <person name="Peterson S.N."/>
            <person name="Reich C.I."/>
            <person name="McNeil L.K."/>
            <person name="Badger J.H."/>
            <person name="Glodek A."/>
            <person name="Zhou L."/>
            <person name="Overbeek R."/>
            <person name="Gocayne J.D."/>
            <person name="Weidman J.F."/>
            <person name="McDonald L.A."/>
            <person name="Utterback T.R."/>
            <person name="Cotton M.D."/>
            <person name="Spriggs T."/>
            <person name="Artiach P."/>
            <person name="Kaine B.P."/>
            <person name="Sykes S.M."/>
            <person name="Sadow P.W."/>
            <person name="D'Andrea K.P."/>
            <person name="Bowman C."/>
            <person name="Fujii C."/>
            <person name="Garland S.A."/>
            <person name="Mason T.M."/>
            <person name="Olsen G.J."/>
            <person name="Fraser C.M."/>
            <person name="Smith H.O."/>
            <person name="Woese C.R."/>
            <person name="Venter J.C."/>
        </authorList>
    </citation>
    <scope>NUCLEOTIDE SEQUENCE [LARGE SCALE GENOMIC DNA]</scope>
    <source>
        <strain>ATCC 49558 / DSM 4304 / JCM 9628 / NBRC 100126 / VC-16</strain>
    </source>
</reference>
<name>Y2354_ARCFU</name>
<organism>
    <name type="scientific">Archaeoglobus fulgidus (strain ATCC 49558 / DSM 4304 / JCM 9628 / NBRC 100126 / VC-16)</name>
    <dbReference type="NCBI Taxonomy" id="224325"/>
    <lineage>
        <taxon>Archaea</taxon>
        <taxon>Methanobacteriati</taxon>
        <taxon>Methanobacteriota</taxon>
        <taxon>Archaeoglobi</taxon>
        <taxon>Archaeoglobales</taxon>
        <taxon>Archaeoglobaceae</taxon>
        <taxon>Archaeoglobus</taxon>
    </lineage>
</organism>
<keyword id="KW-1185">Reference proteome</keyword>
<keyword id="KW-0732">Signal</keyword>
<accession>O30316</accession>
<feature type="signal peptide" evidence="1">
    <location>
        <begin position="1"/>
        <end position="21"/>
    </location>
</feature>
<feature type="chain" id="PRO_0000013685" description="Uncharacterized protein AF_2354">
    <location>
        <begin position="22"/>
        <end position="95"/>
    </location>
</feature>
<proteinExistence type="inferred from homology"/>
<sequence>MKVLSISLIFFALLLTGCSQVEKIAPDNFNKIFEEGKQFVENTQTEIEDIDIEQLIEKAKELGFNTEILTALYDELKRIHSIRKLSNCSNSMLLP</sequence>